<feature type="chain" id="PRO_0000279465" description="Coiled-coil domain-containing protein 181">
    <location>
        <begin position="1"/>
        <end position="509"/>
    </location>
</feature>
<feature type="region of interest" description="Disordered" evidence="3">
    <location>
        <begin position="46"/>
        <end position="120"/>
    </location>
</feature>
<feature type="region of interest" description="Disordered" evidence="3">
    <location>
        <begin position="241"/>
        <end position="367"/>
    </location>
</feature>
<feature type="coiled-coil region" evidence="2">
    <location>
        <begin position="335"/>
        <end position="375"/>
    </location>
</feature>
<feature type="compositionally biased region" description="Basic and acidic residues" evidence="3">
    <location>
        <begin position="46"/>
        <end position="82"/>
    </location>
</feature>
<feature type="compositionally biased region" description="Polar residues" evidence="3">
    <location>
        <begin position="243"/>
        <end position="266"/>
    </location>
</feature>
<feature type="compositionally biased region" description="Polar residues" evidence="3">
    <location>
        <begin position="300"/>
        <end position="334"/>
    </location>
</feature>
<feature type="compositionally biased region" description="Basic and acidic residues" evidence="3">
    <location>
        <begin position="338"/>
        <end position="367"/>
    </location>
</feature>
<feature type="splice variant" id="VSP_023448" description="In isoform 2." evidence="6">
    <original>QENRDPQQAFRLWLKKKHEEQMKERQTEELRKQEECLFFLKGTEGRERAFKQWLRRKRMEKMAEQQAVRERTRQLRLEAKRSKQLQHHLYMSEAKPFRFTDHYN</original>
    <variation>VSKTSLKNKFIQI</variation>
    <location>
        <begin position="406"/>
        <end position="509"/>
    </location>
</feature>
<feature type="splice variant" id="VSP_023449" description="In isoform 3." evidence="7">
    <location>
        <position position="406"/>
    </location>
</feature>
<feature type="sequence variant" id="VAR_030907" description="In dbSNP:rs3820059." evidence="4 5">
    <original>F</original>
    <variation>S</variation>
    <location>
        <position position="172"/>
    </location>
</feature>
<feature type="sequence variant" id="VAR_056764" description="In dbSNP:rs35107735." evidence="5">
    <original>F</original>
    <variation>I</variation>
    <location>
        <position position="238"/>
    </location>
</feature>
<feature type="sequence variant" id="VAR_056765" description="In dbSNP:rs35287513.">
    <original>S</original>
    <variation>C</variation>
    <location>
        <position position="323"/>
    </location>
</feature>
<feature type="sequence conflict" description="In Ref. 2; BAD97074." evidence="8" ref="2">
    <original>R</original>
    <variation>Q</variation>
    <location>
        <position position="310"/>
    </location>
</feature>
<comment type="function">
    <text evidence="1">Microtubule-binding protein that localizes to the microtubular manchette of elongating spermatids.</text>
</comment>
<comment type="subunit">
    <text evidence="1">Homodimer. Interacts with HOOK1. Interacts with HOOK2. Interacts with HOOK3.</text>
</comment>
<comment type="subcellular location">
    <subcellularLocation>
        <location evidence="1">Cytoplasm</location>
        <location evidence="1">Cytoskeleton</location>
    </subcellularLocation>
    <subcellularLocation>
        <location evidence="1">Cell projection</location>
        <location evidence="1">Cilium</location>
        <location evidence="1">Flagellum</location>
    </subcellularLocation>
    <text evidence="1">Localizes to the microtubular manchette of elongating spermatids. Localizes to the sperm flagella and to the basal half of motile cilia.</text>
</comment>
<comment type="alternative products">
    <event type="alternative splicing"/>
    <isoform>
        <id>Q5TID7-1</id>
        <name>1</name>
        <sequence type="displayed"/>
    </isoform>
    <isoform>
        <id>Q5TID7-2</id>
        <name>2</name>
        <sequence type="described" ref="VSP_023448"/>
    </isoform>
    <isoform>
        <id>Q5TID7-3</id>
        <name>3</name>
        <sequence type="described" ref="VSP_023449"/>
    </isoform>
</comment>
<comment type="similarity">
    <text evidence="8">Belongs to the CCDC181 family.</text>
</comment>
<comment type="sequence caution" evidence="8">
    <conflict type="frameshift">
        <sequence resource="EMBL-CDS" id="AAH26073"/>
    </conflict>
</comment>
<evidence type="ECO:0000250" key="1">
    <source>
        <dbReference type="UniProtKB" id="Q80ZU5"/>
    </source>
</evidence>
<evidence type="ECO:0000255" key="2"/>
<evidence type="ECO:0000256" key="3">
    <source>
        <dbReference type="SAM" id="MobiDB-lite"/>
    </source>
</evidence>
<evidence type="ECO:0000269" key="4">
    <source>
    </source>
</evidence>
<evidence type="ECO:0000269" key="5">
    <source ref="2"/>
</evidence>
<evidence type="ECO:0000303" key="6">
    <source>
    </source>
</evidence>
<evidence type="ECO:0000303" key="7">
    <source ref="1"/>
</evidence>
<evidence type="ECO:0000305" key="8"/>
<evidence type="ECO:0000312" key="9">
    <source>
        <dbReference type="HGNC" id="HGNC:28051"/>
    </source>
</evidence>
<gene>
    <name evidence="9" type="primary">CCDC181</name>
    <name evidence="9" type="synonym">C1orf114</name>
</gene>
<name>CC181_HUMAN</name>
<sequence>MNENKDTDSKKSEEYEDDFEKDLEWLINENEKSDASIIEMACEKEENINQDLKENETVMEHTKRHSDPDKSLQDEVSPRRNDIISVPGIQPLDPISDSDSENSFQESKLESQKDLEEEEDEEVRRYIMEKIVQANKLLQNQEPVNDKRERKLKFKDQLVDLEVPPLEDTTTFKNYFENERNMFGKLSQLCISNDFGQEDVLLSLTNGSCEENKDRTILVERDGKFELLNLQDIASQGFLPPINNANSTENDPQQLLPRSSNSSVSGTKKEDSTAKIHAVTHSSTGEPLAYIAQPPLNRKTCPSSAVNSDRSKGNGKSNHRTQSAHISPVTSTYCLSPRQKELQKQLEEKREKLKREEERRKIEEEKEKKRENDIVFKAWLQKKREQVLEMRRIQRAKEIEDMNSRQENRDPQQAFRLWLKKKHEEQMKERQTEELRKQEECLFFLKGTEGRERAFKQWLRRKRMEKMAEQQAVRERTRQLRLEAKRSKQLQHHLYMSEAKPFRFTDHYN</sequence>
<protein>
    <recommendedName>
        <fullName evidence="8">Coiled-coil domain-containing protein 181</fullName>
    </recommendedName>
</protein>
<proteinExistence type="evidence at protein level"/>
<organism>
    <name type="scientific">Homo sapiens</name>
    <name type="common">Human</name>
    <dbReference type="NCBI Taxonomy" id="9606"/>
    <lineage>
        <taxon>Eukaryota</taxon>
        <taxon>Metazoa</taxon>
        <taxon>Chordata</taxon>
        <taxon>Craniata</taxon>
        <taxon>Vertebrata</taxon>
        <taxon>Euteleostomi</taxon>
        <taxon>Mammalia</taxon>
        <taxon>Eutheria</taxon>
        <taxon>Euarchontoglires</taxon>
        <taxon>Primates</taxon>
        <taxon>Haplorrhini</taxon>
        <taxon>Catarrhini</taxon>
        <taxon>Hominidae</taxon>
        <taxon>Homo</taxon>
    </lineage>
</organism>
<reference key="1">
    <citation type="submission" date="1999-04" db="EMBL/GenBank/DDBJ databases">
        <authorList>
            <person name="Rhodes S."/>
            <person name="Huckle E."/>
        </authorList>
    </citation>
    <scope>NUCLEOTIDE SEQUENCE [LARGE SCALE MRNA] (ISOFORM 3)</scope>
</reference>
<reference key="2">
    <citation type="submission" date="2005-04" db="EMBL/GenBank/DDBJ databases">
        <authorList>
            <person name="Suzuki Y."/>
            <person name="Sugano S."/>
            <person name="Totoki Y."/>
            <person name="Toyoda A."/>
            <person name="Takeda T."/>
            <person name="Sakaki Y."/>
            <person name="Tanaka A."/>
            <person name="Yokoyama S."/>
        </authorList>
    </citation>
    <scope>NUCLEOTIDE SEQUENCE [LARGE SCALE MRNA] (ISOFORM 1)</scope>
    <scope>VARIANTS SER-172 AND ILE-238</scope>
    <source>
        <tissue>Testis</tissue>
    </source>
</reference>
<reference key="3">
    <citation type="journal article" date="2006" name="Nature">
        <title>The DNA sequence and biological annotation of human chromosome 1.</title>
        <authorList>
            <person name="Gregory S.G."/>
            <person name="Barlow K.F."/>
            <person name="McLay K.E."/>
            <person name="Kaul R."/>
            <person name="Swarbreck D."/>
            <person name="Dunham A."/>
            <person name="Scott C.E."/>
            <person name="Howe K.L."/>
            <person name="Woodfine K."/>
            <person name="Spencer C.C.A."/>
            <person name="Jones M.C."/>
            <person name="Gillson C."/>
            <person name="Searle S."/>
            <person name="Zhou Y."/>
            <person name="Kokocinski F."/>
            <person name="McDonald L."/>
            <person name="Evans R."/>
            <person name="Phillips K."/>
            <person name="Atkinson A."/>
            <person name="Cooper R."/>
            <person name="Jones C."/>
            <person name="Hall R.E."/>
            <person name="Andrews T.D."/>
            <person name="Lloyd C."/>
            <person name="Ainscough R."/>
            <person name="Almeida J.P."/>
            <person name="Ambrose K.D."/>
            <person name="Anderson F."/>
            <person name="Andrew R.W."/>
            <person name="Ashwell R.I.S."/>
            <person name="Aubin K."/>
            <person name="Babbage A.K."/>
            <person name="Bagguley C.L."/>
            <person name="Bailey J."/>
            <person name="Beasley H."/>
            <person name="Bethel G."/>
            <person name="Bird C.P."/>
            <person name="Bray-Allen S."/>
            <person name="Brown J.Y."/>
            <person name="Brown A.J."/>
            <person name="Buckley D."/>
            <person name="Burton J."/>
            <person name="Bye J."/>
            <person name="Carder C."/>
            <person name="Chapman J.C."/>
            <person name="Clark S.Y."/>
            <person name="Clarke G."/>
            <person name="Clee C."/>
            <person name="Cobley V."/>
            <person name="Collier R.E."/>
            <person name="Corby N."/>
            <person name="Coville G.J."/>
            <person name="Davies J."/>
            <person name="Deadman R."/>
            <person name="Dunn M."/>
            <person name="Earthrowl M."/>
            <person name="Ellington A.G."/>
            <person name="Errington H."/>
            <person name="Frankish A."/>
            <person name="Frankland J."/>
            <person name="French L."/>
            <person name="Garner P."/>
            <person name="Garnett J."/>
            <person name="Gay L."/>
            <person name="Ghori M.R.J."/>
            <person name="Gibson R."/>
            <person name="Gilby L.M."/>
            <person name="Gillett W."/>
            <person name="Glithero R.J."/>
            <person name="Grafham D.V."/>
            <person name="Griffiths C."/>
            <person name="Griffiths-Jones S."/>
            <person name="Grocock R."/>
            <person name="Hammond S."/>
            <person name="Harrison E.S.I."/>
            <person name="Hart E."/>
            <person name="Haugen E."/>
            <person name="Heath P.D."/>
            <person name="Holmes S."/>
            <person name="Holt K."/>
            <person name="Howden P.J."/>
            <person name="Hunt A.R."/>
            <person name="Hunt S.E."/>
            <person name="Hunter G."/>
            <person name="Isherwood J."/>
            <person name="James R."/>
            <person name="Johnson C."/>
            <person name="Johnson D."/>
            <person name="Joy A."/>
            <person name="Kay M."/>
            <person name="Kershaw J.K."/>
            <person name="Kibukawa M."/>
            <person name="Kimberley A.M."/>
            <person name="King A."/>
            <person name="Knights A.J."/>
            <person name="Lad H."/>
            <person name="Laird G."/>
            <person name="Lawlor S."/>
            <person name="Leongamornlert D.A."/>
            <person name="Lloyd D.M."/>
            <person name="Loveland J."/>
            <person name="Lovell J."/>
            <person name="Lush M.J."/>
            <person name="Lyne R."/>
            <person name="Martin S."/>
            <person name="Mashreghi-Mohammadi M."/>
            <person name="Matthews L."/>
            <person name="Matthews N.S.W."/>
            <person name="McLaren S."/>
            <person name="Milne S."/>
            <person name="Mistry S."/>
            <person name="Moore M.J.F."/>
            <person name="Nickerson T."/>
            <person name="O'Dell C.N."/>
            <person name="Oliver K."/>
            <person name="Palmeiri A."/>
            <person name="Palmer S.A."/>
            <person name="Parker A."/>
            <person name="Patel D."/>
            <person name="Pearce A.V."/>
            <person name="Peck A.I."/>
            <person name="Pelan S."/>
            <person name="Phelps K."/>
            <person name="Phillimore B.J."/>
            <person name="Plumb R."/>
            <person name="Rajan J."/>
            <person name="Raymond C."/>
            <person name="Rouse G."/>
            <person name="Saenphimmachak C."/>
            <person name="Sehra H.K."/>
            <person name="Sheridan E."/>
            <person name="Shownkeen R."/>
            <person name="Sims S."/>
            <person name="Skuce C.D."/>
            <person name="Smith M."/>
            <person name="Steward C."/>
            <person name="Subramanian S."/>
            <person name="Sycamore N."/>
            <person name="Tracey A."/>
            <person name="Tromans A."/>
            <person name="Van Helmond Z."/>
            <person name="Wall M."/>
            <person name="Wallis J.M."/>
            <person name="White S."/>
            <person name="Whitehead S.L."/>
            <person name="Wilkinson J.E."/>
            <person name="Willey D.L."/>
            <person name="Williams H."/>
            <person name="Wilming L."/>
            <person name="Wray P.W."/>
            <person name="Wu Z."/>
            <person name="Coulson A."/>
            <person name="Vaudin M."/>
            <person name="Sulston J.E."/>
            <person name="Durbin R.M."/>
            <person name="Hubbard T."/>
            <person name="Wooster R."/>
            <person name="Dunham I."/>
            <person name="Carter N.P."/>
            <person name="McVean G."/>
            <person name="Ross M.T."/>
            <person name="Harrow J."/>
            <person name="Olson M.V."/>
            <person name="Beck S."/>
            <person name="Rogers J."/>
            <person name="Bentley D.R."/>
        </authorList>
    </citation>
    <scope>NUCLEOTIDE SEQUENCE [LARGE SCALE GENOMIC DNA]</scope>
</reference>
<reference key="4">
    <citation type="journal article" date="2004" name="Genome Res.">
        <title>The status, quality, and expansion of the NIH full-length cDNA project: the Mammalian Gene Collection (MGC).</title>
        <authorList>
            <consortium name="The MGC Project Team"/>
        </authorList>
    </citation>
    <scope>NUCLEOTIDE SEQUENCE [LARGE SCALE MRNA] (ISOFORM 2)</scope>
    <scope>VARIANT SER-172</scope>
    <source>
        <tissue>Testis</tissue>
    </source>
</reference>
<dbReference type="EMBL" id="AL049687">
    <property type="protein sequence ID" value="CAB41258.1"/>
    <property type="molecule type" value="mRNA"/>
</dbReference>
<dbReference type="EMBL" id="AK223354">
    <property type="protein sequence ID" value="BAD97074.1"/>
    <property type="molecule type" value="mRNA"/>
</dbReference>
<dbReference type="EMBL" id="AL021068">
    <property type="status" value="NOT_ANNOTATED_CDS"/>
    <property type="molecule type" value="Genomic_DNA"/>
</dbReference>
<dbReference type="EMBL" id="BC026073">
    <property type="protein sequence ID" value="AAH26073.1"/>
    <property type="status" value="ALT_FRAME"/>
    <property type="molecule type" value="mRNA"/>
</dbReference>
<dbReference type="CCDS" id="CCDS1279.1">
    <molecule id="Q5TID7-3"/>
</dbReference>
<dbReference type="CCDS" id="CCDS72979.1">
    <molecule id="Q5TID7-1"/>
</dbReference>
<dbReference type="RefSeq" id="NP_001287897.1">
    <molecule id="Q5TID7-3"/>
    <property type="nucleotide sequence ID" value="NM_001300968.1"/>
</dbReference>
<dbReference type="RefSeq" id="NP_001287898.1">
    <molecule id="Q5TID7-1"/>
    <property type="nucleotide sequence ID" value="NM_001300969.2"/>
</dbReference>
<dbReference type="RefSeq" id="NP_001380936.1">
    <molecule id="Q5TID7-1"/>
    <property type="nucleotide sequence ID" value="NM_001394007.1"/>
</dbReference>
<dbReference type="RefSeq" id="NP_001380937.1">
    <molecule id="Q5TID7-3"/>
    <property type="nucleotide sequence ID" value="NM_001394008.1"/>
</dbReference>
<dbReference type="RefSeq" id="NP_001380938.1">
    <molecule id="Q5TID7-2"/>
    <property type="nucleotide sequence ID" value="NM_001394009.1"/>
</dbReference>
<dbReference type="RefSeq" id="NP_067002.1">
    <molecule id="Q5TID7-3"/>
    <property type="nucleotide sequence ID" value="NM_021179.3"/>
</dbReference>
<dbReference type="RefSeq" id="XP_005245440.1">
    <molecule id="Q5TID7-1"/>
    <property type="nucleotide sequence ID" value="XM_005245383.1"/>
</dbReference>
<dbReference type="RefSeq" id="XP_011508129.1">
    <property type="nucleotide sequence ID" value="XM_011509827.2"/>
</dbReference>
<dbReference type="RefSeq" id="XP_016857427.1">
    <molecule id="Q5TID7-1"/>
    <property type="nucleotide sequence ID" value="XM_017001938.2"/>
</dbReference>
<dbReference type="RefSeq" id="XP_016857428.1">
    <property type="nucleotide sequence ID" value="XM_017001939.1"/>
</dbReference>
<dbReference type="RefSeq" id="XP_016857429.1">
    <property type="nucleotide sequence ID" value="XM_017001940.1"/>
</dbReference>
<dbReference type="SMR" id="Q5TID7"/>
<dbReference type="BioGRID" id="121780">
    <property type="interactions" value="6"/>
</dbReference>
<dbReference type="FunCoup" id="Q5TID7">
    <property type="interactions" value="19"/>
</dbReference>
<dbReference type="IntAct" id="Q5TID7">
    <property type="interactions" value="6"/>
</dbReference>
<dbReference type="MINT" id="Q5TID7"/>
<dbReference type="STRING" id="9606.ENSP00000356780"/>
<dbReference type="GlyGen" id="Q5TID7">
    <property type="glycosylation" value="1 site, 1 O-linked glycan (1 site)"/>
</dbReference>
<dbReference type="iPTMnet" id="Q5TID7"/>
<dbReference type="PhosphoSitePlus" id="Q5TID7"/>
<dbReference type="BioMuta" id="CCDC181"/>
<dbReference type="DMDM" id="74746645"/>
<dbReference type="jPOST" id="Q5TID7"/>
<dbReference type="MassIVE" id="Q5TID7"/>
<dbReference type="PaxDb" id="9606-ENSP00000356780"/>
<dbReference type="PeptideAtlas" id="Q5TID7"/>
<dbReference type="ProteomicsDB" id="65189">
    <molecule id="Q5TID7-1"/>
</dbReference>
<dbReference type="ProteomicsDB" id="65190">
    <molecule id="Q5TID7-2"/>
</dbReference>
<dbReference type="ProteomicsDB" id="65191">
    <molecule id="Q5TID7-3"/>
</dbReference>
<dbReference type="Antibodypedia" id="34357">
    <property type="antibodies" value="93 antibodies from 12 providers"/>
</dbReference>
<dbReference type="DNASU" id="57821"/>
<dbReference type="Ensembl" id="ENST00000367805.7">
    <molecule id="Q5TID7-3"/>
    <property type="protein sequence ID" value="ENSP00000356779.3"/>
    <property type="gene ID" value="ENSG00000117477.13"/>
</dbReference>
<dbReference type="Ensembl" id="ENST00000367806.8">
    <molecule id="Q5TID7-1"/>
    <property type="protein sequence ID" value="ENSP00000356780.3"/>
    <property type="gene ID" value="ENSG00000117477.13"/>
</dbReference>
<dbReference type="Ensembl" id="ENST00000545005.5">
    <molecule id="Q5TID7-3"/>
    <property type="protein sequence ID" value="ENSP00000442297.1"/>
    <property type="gene ID" value="ENSG00000117477.13"/>
</dbReference>
<dbReference type="GeneID" id="57821"/>
<dbReference type="KEGG" id="hsa:57821"/>
<dbReference type="MANE-Select" id="ENST00000367806.8">
    <property type="protein sequence ID" value="ENSP00000356780.3"/>
    <property type="RefSeq nucleotide sequence ID" value="NM_001300969.2"/>
    <property type="RefSeq protein sequence ID" value="NP_001287898.1"/>
</dbReference>
<dbReference type="UCSC" id="uc001gfz.2">
    <molecule id="Q5TID7-1"/>
    <property type="organism name" value="human"/>
</dbReference>
<dbReference type="AGR" id="HGNC:28051"/>
<dbReference type="CTD" id="57821"/>
<dbReference type="DisGeNET" id="57821"/>
<dbReference type="GeneCards" id="CCDC181"/>
<dbReference type="HGNC" id="HGNC:28051">
    <property type="gene designation" value="CCDC181"/>
</dbReference>
<dbReference type="HPA" id="ENSG00000117477">
    <property type="expression patterns" value="Tissue enhanced (choroid plexus, retina, testis)"/>
</dbReference>
<dbReference type="MIM" id="620891">
    <property type="type" value="gene"/>
</dbReference>
<dbReference type="neXtProt" id="NX_Q5TID7"/>
<dbReference type="OpenTargets" id="ENSG00000117477"/>
<dbReference type="PharmGKB" id="PA142672498"/>
<dbReference type="VEuPathDB" id="HostDB:ENSG00000117477"/>
<dbReference type="eggNOG" id="ENOG502QV5R">
    <property type="taxonomic scope" value="Eukaryota"/>
</dbReference>
<dbReference type="GeneTree" id="ENSGT00390000018244"/>
<dbReference type="HOGENOM" id="CLU_040811_0_0_1"/>
<dbReference type="InParanoid" id="Q5TID7"/>
<dbReference type="OMA" id="KAWLMRK"/>
<dbReference type="OrthoDB" id="6288248at2759"/>
<dbReference type="PAN-GO" id="Q5TID7">
    <property type="GO annotations" value="1 GO annotation based on evolutionary models"/>
</dbReference>
<dbReference type="PhylomeDB" id="Q5TID7"/>
<dbReference type="TreeFam" id="TF331115"/>
<dbReference type="PathwayCommons" id="Q5TID7"/>
<dbReference type="SignaLink" id="Q5TID7"/>
<dbReference type="BioGRID-ORCS" id="57821">
    <property type="hits" value="17 hits in 1133 CRISPR screens"/>
</dbReference>
<dbReference type="ChiTaRS" id="CCDC181">
    <property type="organism name" value="human"/>
</dbReference>
<dbReference type="GenomeRNAi" id="57821"/>
<dbReference type="Pharos" id="Q5TID7">
    <property type="development level" value="Tdark"/>
</dbReference>
<dbReference type="PRO" id="PR:Q5TID7"/>
<dbReference type="Proteomes" id="UP000005640">
    <property type="component" value="Chromosome 1"/>
</dbReference>
<dbReference type="RNAct" id="Q5TID7">
    <property type="molecule type" value="protein"/>
</dbReference>
<dbReference type="Bgee" id="ENSG00000117477">
    <property type="expression patterns" value="Expressed in sperm and 152 other cell types or tissues"/>
</dbReference>
<dbReference type="ExpressionAtlas" id="Q5TID7">
    <property type="expression patterns" value="baseline and differential"/>
</dbReference>
<dbReference type="GO" id="GO:0005737">
    <property type="term" value="C:cytoplasm"/>
    <property type="evidence" value="ECO:0007669"/>
    <property type="project" value="UniProtKB-KW"/>
</dbReference>
<dbReference type="GO" id="GO:0002177">
    <property type="term" value="C:manchette"/>
    <property type="evidence" value="ECO:0000250"/>
    <property type="project" value="UniProtKB"/>
</dbReference>
<dbReference type="GO" id="GO:0005874">
    <property type="term" value="C:microtubule"/>
    <property type="evidence" value="ECO:0007669"/>
    <property type="project" value="UniProtKB-KW"/>
</dbReference>
<dbReference type="GO" id="GO:0036126">
    <property type="term" value="C:sperm flagellum"/>
    <property type="evidence" value="ECO:0000250"/>
    <property type="project" value="UniProtKB"/>
</dbReference>
<dbReference type="GO" id="GO:0008017">
    <property type="term" value="F:microtubule binding"/>
    <property type="evidence" value="ECO:0000250"/>
    <property type="project" value="UniProtKB"/>
</dbReference>
<dbReference type="InterPro" id="IPR026687">
    <property type="entry name" value="CCDC181"/>
</dbReference>
<dbReference type="PANTHER" id="PTHR14320">
    <property type="entry name" value="COILED-COIL DOMAIN-CONTAINING PROTEIN 181"/>
    <property type="match status" value="1"/>
</dbReference>
<dbReference type="PANTHER" id="PTHR14320:SF2">
    <property type="entry name" value="COILED-COIL DOMAIN-CONTAINING PROTEIN 181"/>
    <property type="match status" value="1"/>
</dbReference>
<accession>Q5TID7</accession>
<accession>O60780</accession>
<accession>Q53FD5</accession>
<accession>Q5TID9</accession>
<accession>Q8TC48</accession>
<keyword id="KW-0025">Alternative splicing</keyword>
<keyword id="KW-0966">Cell projection</keyword>
<keyword id="KW-0969">Cilium</keyword>
<keyword id="KW-0175">Coiled coil</keyword>
<keyword id="KW-0963">Cytoplasm</keyword>
<keyword id="KW-0206">Cytoskeleton</keyword>
<keyword id="KW-0282">Flagellum</keyword>
<keyword id="KW-0493">Microtubule</keyword>
<keyword id="KW-1267">Proteomics identification</keyword>
<keyword id="KW-1185">Reference proteome</keyword>